<keyword id="KW-0025">Alternative splicing</keyword>
<keyword id="KW-0472">Membrane</keyword>
<keyword id="KW-1267">Proteomics identification</keyword>
<keyword id="KW-1185">Reference proteome</keyword>
<keyword id="KW-0732">Signal</keyword>
<keyword id="KW-0812">Transmembrane</keyword>
<keyword id="KW-1133">Transmembrane helix</keyword>
<sequence length="105" mass="11325">MNLGVSMLRILFLLDVGGAQVLATGKTPGAEIDFKYALIGTAVGVAISAGFLALKICMIRRHLFDDDSSDLKSTPGGLSDTIPLKKRAPRRNHNFSKRDAQVIEL</sequence>
<accession>Q5T292</accession>
<accession>A6XND2</accession>
<accession>Q5T289</accession>
<accession>Q5T291</accession>
<organism>
    <name type="scientific">Homo sapiens</name>
    <name type="common">Human</name>
    <dbReference type="NCBI Taxonomy" id="9606"/>
    <lineage>
        <taxon>Eukaryota</taxon>
        <taxon>Metazoa</taxon>
        <taxon>Chordata</taxon>
        <taxon>Craniata</taxon>
        <taxon>Vertebrata</taxon>
        <taxon>Euteleostomi</taxon>
        <taxon>Mammalia</taxon>
        <taxon>Eutheria</taxon>
        <taxon>Euarchontoglires</taxon>
        <taxon>Primates</taxon>
        <taxon>Haplorrhini</taxon>
        <taxon>Catarrhini</taxon>
        <taxon>Hominidae</taxon>
        <taxon>Homo</taxon>
    </lineage>
</organism>
<comment type="subcellular location">
    <subcellularLocation>
        <location>Membrane</location>
        <topology>Single-pass type I membrane protein</topology>
    </subcellularLocation>
</comment>
<comment type="alternative products">
    <event type="alternative splicing"/>
    <isoform>
        <id>Q5T292-1</id>
        <name>1</name>
        <sequence type="displayed"/>
    </isoform>
    <isoform>
        <id>Q5T292-2</id>
        <name>2</name>
        <sequence type="described" ref="VSP_028715"/>
    </isoform>
    <isoform>
        <id>Q5T292-3</id>
        <name>3</name>
        <sequence type="described" ref="VSP_028716"/>
    </isoform>
    <isoform>
        <id>Q5T292-4</id>
        <name>4</name>
        <sequence type="described" ref="VSP_028717"/>
    </isoform>
</comment>
<evidence type="ECO:0000255" key="1"/>
<evidence type="ECO:0000303" key="2">
    <source>
    </source>
</evidence>
<evidence type="ECO:0000303" key="3">
    <source ref="1"/>
</evidence>
<evidence type="ECO:0000303" key="4">
    <source ref="2"/>
</evidence>
<evidence type="ECO:0000305" key="5"/>
<evidence type="ECO:0000312" key="6">
    <source>
        <dbReference type="HGNC" id="HGNC:27274"/>
    </source>
</evidence>
<name>TM273_HUMAN</name>
<dbReference type="EMBL" id="DQ884399">
    <property type="protein sequence ID" value="ABI63366.1"/>
    <property type="molecule type" value="mRNA"/>
</dbReference>
<dbReference type="EMBL" id="AL524299">
    <property type="status" value="NOT_ANNOTATED_CDS"/>
    <property type="molecule type" value="mRNA"/>
</dbReference>
<dbReference type="EMBL" id="AC084727">
    <property type="status" value="NOT_ANNOTATED_CDS"/>
    <property type="molecule type" value="Genomic_DNA"/>
</dbReference>
<dbReference type="EMBL" id="AL441885">
    <property type="status" value="NOT_ANNOTATED_CDS"/>
    <property type="molecule type" value="Genomic_DNA"/>
</dbReference>
<dbReference type="EMBL" id="CH471187">
    <property type="protein sequence ID" value="EAW93107.1"/>
    <property type="molecule type" value="Genomic_DNA"/>
</dbReference>
<dbReference type="EMBL" id="CH471187">
    <property type="protein sequence ID" value="EAW93108.1"/>
    <property type="molecule type" value="Genomic_DNA"/>
</dbReference>
<dbReference type="EMBL" id="CH471187">
    <property type="protein sequence ID" value="EAW93110.1"/>
    <property type="molecule type" value="Genomic_DNA"/>
</dbReference>
<dbReference type="EMBL" id="BC104438">
    <property type="status" value="NOT_ANNOTATED_CDS"/>
    <property type="molecule type" value="mRNA"/>
</dbReference>
<dbReference type="EMBL" id="BC104439">
    <property type="status" value="NOT_ANNOTATED_CDS"/>
    <property type="molecule type" value="mRNA"/>
</dbReference>
<dbReference type="EMBL" id="BI544323">
    <property type="status" value="NOT_ANNOTATED_CDS"/>
    <property type="molecule type" value="mRNA"/>
</dbReference>
<dbReference type="CCDS" id="CCDS41519.1">
    <molecule id="Q5T292-1"/>
</dbReference>
<dbReference type="CCDS" id="CCDS73128.1">
    <molecule id="Q5T292-4"/>
</dbReference>
<dbReference type="RefSeq" id="NP_001010863.1">
    <molecule id="Q5T292-1"/>
    <property type="nucleotide sequence ID" value="NM_001010863.4"/>
</dbReference>
<dbReference type="RefSeq" id="NP_001275669.1">
    <molecule id="Q5T292-4"/>
    <property type="nucleotide sequence ID" value="NM_001288740.3"/>
</dbReference>
<dbReference type="RefSeq" id="NP_001275672.1">
    <molecule id="Q5T292-2"/>
    <property type="nucleotide sequence ID" value="NM_001288743.3"/>
</dbReference>
<dbReference type="SMR" id="Q5T292"/>
<dbReference type="BioGRID" id="128000">
    <property type="interactions" value="1"/>
</dbReference>
<dbReference type="FunCoup" id="Q5T292">
    <property type="interactions" value="7"/>
</dbReference>
<dbReference type="STRING" id="9606.ENSP00000363268"/>
<dbReference type="iPTMnet" id="Q5T292"/>
<dbReference type="PhosphoSitePlus" id="Q5T292"/>
<dbReference type="BioMuta" id="C10orf128"/>
<dbReference type="DMDM" id="74744592"/>
<dbReference type="MassIVE" id="Q5T292"/>
<dbReference type="PaxDb" id="9606-ENSP00000363268"/>
<dbReference type="PeptideAtlas" id="Q5T292"/>
<dbReference type="Antibodypedia" id="49947">
    <property type="antibodies" value="6 antibodies from 6 providers"/>
</dbReference>
<dbReference type="DNASU" id="170371"/>
<dbReference type="Ensembl" id="ENST00000374148.1">
    <molecule id="Q5T292-3"/>
    <property type="protein sequence ID" value="ENSP00000363263.1"/>
    <property type="gene ID" value="ENSG00000204161.15"/>
</dbReference>
<dbReference type="Ensembl" id="ENST00000374153.7">
    <molecule id="Q5T292-4"/>
    <property type="protein sequence ID" value="ENSP00000363268.1"/>
    <property type="gene ID" value="ENSG00000204161.15"/>
</dbReference>
<dbReference type="Ensembl" id="ENST00000474718.6">
    <molecule id="Q5T292-1"/>
    <property type="protein sequence ID" value="ENSP00000417246.1"/>
    <property type="gene ID" value="ENSG00000204161.15"/>
</dbReference>
<dbReference type="GeneID" id="170371"/>
<dbReference type="KEGG" id="hsa:170371"/>
<dbReference type="MANE-Select" id="ENST00000374153.7">
    <molecule id="Q5T292-4"/>
    <property type="protein sequence ID" value="ENSP00000363268.1"/>
    <property type="RefSeq nucleotide sequence ID" value="NM_001288740.3"/>
    <property type="RefSeq protein sequence ID" value="NP_001275669.1"/>
</dbReference>
<dbReference type="UCSC" id="uc001jhn.6">
    <molecule id="Q5T292-1"/>
    <property type="organism name" value="human"/>
</dbReference>
<dbReference type="AGR" id="HGNC:27274"/>
<dbReference type="CTD" id="170371"/>
<dbReference type="DisGeNET" id="170371"/>
<dbReference type="GeneCards" id="TMEM273"/>
<dbReference type="HGNC" id="HGNC:27274">
    <property type="gene designation" value="TMEM273"/>
</dbReference>
<dbReference type="HPA" id="ENSG00000204161">
    <property type="expression patterns" value="Low tissue specificity"/>
</dbReference>
<dbReference type="neXtProt" id="NX_Q5T292"/>
<dbReference type="OpenTargets" id="ENSG00000204161"/>
<dbReference type="PharmGKB" id="PA134962893"/>
<dbReference type="VEuPathDB" id="HostDB:ENSG00000204161"/>
<dbReference type="eggNOG" id="ENOG502SWNF">
    <property type="taxonomic scope" value="Eukaryota"/>
</dbReference>
<dbReference type="GeneTree" id="ENSGT00390000000409"/>
<dbReference type="HOGENOM" id="CLU_176398_0_0_1"/>
<dbReference type="InParanoid" id="Q5T292"/>
<dbReference type="OMA" id="THQAPND"/>
<dbReference type="OrthoDB" id="9450584at2759"/>
<dbReference type="PAN-GO" id="Q5T292">
    <property type="GO annotations" value="0 GO annotations based on evolutionary models"/>
</dbReference>
<dbReference type="PhylomeDB" id="Q5T292"/>
<dbReference type="TreeFam" id="TF354108"/>
<dbReference type="PathwayCommons" id="Q5T292"/>
<dbReference type="BioGRID-ORCS" id="170371">
    <property type="hits" value="12 hits in 1140 CRISPR screens"/>
</dbReference>
<dbReference type="ChiTaRS" id="C10orf128">
    <property type="organism name" value="human"/>
</dbReference>
<dbReference type="GenomeRNAi" id="170371"/>
<dbReference type="Pharos" id="Q5T292">
    <property type="development level" value="Tdark"/>
</dbReference>
<dbReference type="PRO" id="PR:Q5T292"/>
<dbReference type="Proteomes" id="UP000005640">
    <property type="component" value="Chromosome 10"/>
</dbReference>
<dbReference type="RNAct" id="Q5T292">
    <property type="molecule type" value="protein"/>
</dbReference>
<dbReference type="Bgee" id="ENSG00000204161">
    <property type="expression patterns" value="Expressed in calcaneal tendon and 163 other cell types or tissues"/>
</dbReference>
<dbReference type="ExpressionAtlas" id="Q5T292">
    <property type="expression patterns" value="baseline and differential"/>
</dbReference>
<dbReference type="GO" id="GO:0016020">
    <property type="term" value="C:membrane"/>
    <property type="evidence" value="ECO:0007669"/>
    <property type="project" value="UniProtKB-SubCell"/>
</dbReference>
<dbReference type="InterPro" id="IPR029395">
    <property type="entry name" value="DUF4514"/>
</dbReference>
<dbReference type="PANTHER" id="PTHR37857">
    <property type="entry name" value="TRANSMEMBRANE PROTEIN 273"/>
    <property type="match status" value="1"/>
</dbReference>
<dbReference type="PANTHER" id="PTHR37857:SF1">
    <property type="entry name" value="TRANSMEMBRANE PROTEIN 273"/>
    <property type="match status" value="1"/>
</dbReference>
<dbReference type="Pfam" id="PF14986">
    <property type="entry name" value="DUF4514"/>
    <property type="match status" value="1"/>
</dbReference>
<protein>
    <recommendedName>
        <fullName evidence="5">Transmembrane protein 273</fullName>
    </recommendedName>
</protein>
<proteinExistence type="evidence at protein level"/>
<reference key="1">
    <citation type="submission" date="2006-07" db="EMBL/GenBank/DDBJ databases">
        <title>A computer system platform used to predict novel genes.</title>
        <authorList>
            <person name="Yu Z."/>
            <person name="Zheng Z."/>
            <person name="Tang T."/>
            <person name="Fu Y."/>
        </authorList>
    </citation>
    <scope>NUCLEOTIDE SEQUENCE [MRNA] (ISOFORM 2)</scope>
</reference>
<reference key="2">
    <citation type="submission" date="2004-03" db="EMBL/GenBank/DDBJ databases">
        <title>Full-length cDNA libraries and normalization.</title>
        <authorList>
            <person name="Li W.B."/>
            <person name="Gruber C."/>
            <person name="Jessee J."/>
            <person name="Polayes D."/>
        </authorList>
    </citation>
    <scope>NUCLEOTIDE SEQUENCE [LARGE SCALE MRNA] (ISOFORM 4)</scope>
    <source>
        <tissue>Neuroblastoma</tissue>
    </source>
</reference>
<reference key="3">
    <citation type="journal article" date="2004" name="Nature">
        <title>The DNA sequence and comparative analysis of human chromosome 10.</title>
        <authorList>
            <person name="Deloukas P."/>
            <person name="Earthrowl M.E."/>
            <person name="Grafham D.V."/>
            <person name="Rubenfield M."/>
            <person name="French L."/>
            <person name="Steward C.A."/>
            <person name="Sims S.K."/>
            <person name="Jones M.C."/>
            <person name="Searle S."/>
            <person name="Scott C."/>
            <person name="Howe K."/>
            <person name="Hunt S.E."/>
            <person name="Andrews T.D."/>
            <person name="Gilbert J.G.R."/>
            <person name="Swarbreck D."/>
            <person name="Ashurst J.L."/>
            <person name="Taylor A."/>
            <person name="Battles J."/>
            <person name="Bird C.P."/>
            <person name="Ainscough R."/>
            <person name="Almeida J.P."/>
            <person name="Ashwell R.I.S."/>
            <person name="Ambrose K.D."/>
            <person name="Babbage A.K."/>
            <person name="Bagguley C.L."/>
            <person name="Bailey J."/>
            <person name="Banerjee R."/>
            <person name="Bates K."/>
            <person name="Beasley H."/>
            <person name="Bray-Allen S."/>
            <person name="Brown A.J."/>
            <person name="Brown J.Y."/>
            <person name="Burford D.C."/>
            <person name="Burrill W."/>
            <person name="Burton J."/>
            <person name="Cahill P."/>
            <person name="Camire D."/>
            <person name="Carter N.P."/>
            <person name="Chapman J.C."/>
            <person name="Clark S.Y."/>
            <person name="Clarke G."/>
            <person name="Clee C.M."/>
            <person name="Clegg S."/>
            <person name="Corby N."/>
            <person name="Coulson A."/>
            <person name="Dhami P."/>
            <person name="Dutta I."/>
            <person name="Dunn M."/>
            <person name="Faulkner L."/>
            <person name="Frankish A."/>
            <person name="Frankland J.A."/>
            <person name="Garner P."/>
            <person name="Garnett J."/>
            <person name="Gribble S."/>
            <person name="Griffiths C."/>
            <person name="Grocock R."/>
            <person name="Gustafson E."/>
            <person name="Hammond S."/>
            <person name="Harley J.L."/>
            <person name="Hart E."/>
            <person name="Heath P.D."/>
            <person name="Ho T.P."/>
            <person name="Hopkins B."/>
            <person name="Horne J."/>
            <person name="Howden P.J."/>
            <person name="Huckle E."/>
            <person name="Hynds C."/>
            <person name="Johnson C."/>
            <person name="Johnson D."/>
            <person name="Kana A."/>
            <person name="Kay M."/>
            <person name="Kimberley A.M."/>
            <person name="Kershaw J.K."/>
            <person name="Kokkinaki M."/>
            <person name="Laird G.K."/>
            <person name="Lawlor S."/>
            <person name="Lee H.M."/>
            <person name="Leongamornlert D.A."/>
            <person name="Laird G."/>
            <person name="Lloyd C."/>
            <person name="Lloyd D.M."/>
            <person name="Loveland J."/>
            <person name="Lovell J."/>
            <person name="McLaren S."/>
            <person name="McLay K.E."/>
            <person name="McMurray A."/>
            <person name="Mashreghi-Mohammadi M."/>
            <person name="Matthews L."/>
            <person name="Milne S."/>
            <person name="Nickerson T."/>
            <person name="Nguyen M."/>
            <person name="Overton-Larty E."/>
            <person name="Palmer S.A."/>
            <person name="Pearce A.V."/>
            <person name="Peck A.I."/>
            <person name="Pelan S."/>
            <person name="Phillimore B."/>
            <person name="Porter K."/>
            <person name="Rice C.M."/>
            <person name="Rogosin A."/>
            <person name="Ross M.T."/>
            <person name="Sarafidou T."/>
            <person name="Sehra H.K."/>
            <person name="Shownkeen R."/>
            <person name="Skuce C.D."/>
            <person name="Smith M."/>
            <person name="Standring L."/>
            <person name="Sycamore N."/>
            <person name="Tester J."/>
            <person name="Thorpe A."/>
            <person name="Torcasso W."/>
            <person name="Tracey A."/>
            <person name="Tromans A."/>
            <person name="Tsolas J."/>
            <person name="Wall M."/>
            <person name="Walsh J."/>
            <person name="Wang H."/>
            <person name="Weinstock K."/>
            <person name="West A.P."/>
            <person name="Willey D.L."/>
            <person name="Whitehead S.L."/>
            <person name="Wilming L."/>
            <person name="Wray P.W."/>
            <person name="Young L."/>
            <person name="Chen Y."/>
            <person name="Lovering R.C."/>
            <person name="Moschonas N.K."/>
            <person name="Siebert R."/>
            <person name="Fechtel K."/>
            <person name="Bentley D."/>
            <person name="Durbin R.M."/>
            <person name="Hubbard T."/>
            <person name="Doucette-Stamm L."/>
            <person name="Beck S."/>
            <person name="Smith D.R."/>
            <person name="Rogers J."/>
        </authorList>
    </citation>
    <scope>NUCLEOTIDE SEQUENCE [LARGE SCALE GENOMIC DNA]</scope>
</reference>
<reference key="4">
    <citation type="submission" date="2005-09" db="EMBL/GenBank/DDBJ databases">
        <authorList>
            <person name="Mural R.J."/>
            <person name="Istrail S."/>
            <person name="Sutton G.G."/>
            <person name="Florea L."/>
            <person name="Halpern A.L."/>
            <person name="Mobarry C.M."/>
            <person name="Lippert R."/>
            <person name="Walenz B."/>
            <person name="Shatkay H."/>
            <person name="Dew I."/>
            <person name="Miller J.R."/>
            <person name="Flanigan M.J."/>
            <person name="Edwards N.J."/>
            <person name="Bolanos R."/>
            <person name="Fasulo D."/>
            <person name="Halldorsson B.V."/>
            <person name="Hannenhalli S."/>
            <person name="Turner R."/>
            <person name="Yooseph S."/>
            <person name="Lu F."/>
            <person name="Nusskern D.R."/>
            <person name="Shue B.C."/>
            <person name="Zheng X.H."/>
            <person name="Zhong F."/>
            <person name="Delcher A.L."/>
            <person name="Huson D.H."/>
            <person name="Kravitz S.A."/>
            <person name="Mouchard L."/>
            <person name="Reinert K."/>
            <person name="Remington K.A."/>
            <person name="Clark A.G."/>
            <person name="Waterman M.S."/>
            <person name="Eichler E.E."/>
            <person name="Adams M.D."/>
            <person name="Hunkapiller M.W."/>
            <person name="Myers E.W."/>
            <person name="Venter J.C."/>
        </authorList>
    </citation>
    <scope>NUCLEOTIDE SEQUENCE [LARGE SCALE GENOMIC DNA]</scope>
</reference>
<reference key="5">
    <citation type="journal article" date="2004" name="Genome Res.">
        <title>The status, quality, and expansion of the NIH full-length cDNA project: the Mammalian Gene Collection (MGC).</title>
        <authorList>
            <consortium name="The MGC Project Team"/>
        </authorList>
    </citation>
    <scope>NUCLEOTIDE SEQUENCE [LARGE SCALE MRNA] (ISOFORMS 1 AND 3)</scope>
    <source>
        <tissue>Hippocampus</tissue>
    </source>
</reference>
<gene>
    <name evidence="6" type="primary">TMEM273</name>
    <name evidence="6" type="synonym">C10orf128</name>
</gene>
<feature type="signal peptide" evidence="1">
    <location>
        <begin position="1"/>
        <end position="19"/>
    </location>
</feature>
<feature type="chain" id="PRO_0000307322" description="Transmembrane protein 273">
    <location>
        <begin position="20"/>
        <end position="105"/>
    </location>
</feature>
<feature type="topological domain" description="Extracellular" evidence="1">
    <location>
        <begin position="20"/>
        <end position="38"/>
    </location>
</feature>
<feature type="transmembrane region" description="Helical" evidence="1">
    <location>
        <begin position="39"/>
        <end position="59"/>
    </location>
</feature>
<feature type="topological domain" description="Cytoplasmic" evidence="1">
    <location>
        <begin position="60"/>
        <end position="105"/>
    </location>
</feature>
<feature type="splice variant" id="VSP_028715" description="In isoform 2." evidence="3">
    <original>RNHNFSKRDAQVIEL</original>
    <variation>AHVLRDGPALGPLHLLFSVIGMLFARKLQASTLFSFKSLLQCHHCIMEGLFKAKPQFLQKHLARSVQIHQLQKVKSFPKYAY</variation>
    <location>
        <begin position="91"/>
        <end position="105"/>
    </location>
</feature>
<feature type="splice variant" id="VSP_028716" description="In isoform 3." evidence="2">
    <original>RNHNFSKRDAQVIEL</original>
    <variation>AHVLRDGPALGPLHLLFSVIGMLFARKLQASTLFSFKSLLQCHHCIMEGLFKAKPQFLQKVSCKSDHLS</variation>
    <location>
        <begin position="91"/>
        <end position="105"/>
    </location>
</feature>
<feature type="splice variant" id="VSP_028717" description="In isoform 4." evidence="4">
    <original>RNHNFSKRDAQVIEL</original>
    <variation>KLQASTLFSFKSLLQCHHCIMEGLFKAKPQFLQKRCTGD</variation>
    <location>
        <begin position="91"/>
        <end position="105"/>
    </location>
</feature>
<feature type="sequence variant" id="VAR_035409" description="In dbSNP:rs12257132.">
    <original>P</original>
    <variation>L</variation>
    <location>
        <position position="83"/>
    </location>
</feature>
<feature type="sequence conflict" description="In Ref. 5; BI544323." evidence="5" ref="5">
    <original>V</original>
    <variation>A</variation>
    <location>
        <position position="16"/>
    </location>
</feature>